<protein>
    <recommendedName>
        <fullName evidence="4">Bacterial microcompartment shell vertex protein EutN</fullName>
    </recommendedName>
    <alternativeName>
        <fullName evidence="4">Ethanolamine catabolic microcompartment shell protein EutN</fullName>
    </alternativeName>
    <alternativeName>
        <fullName>Ethanolamine utilization protein EutN</fullName>
    </alternativeName>
</protein>
<feature type="chain" id="PRO_0000087092" description="Bacterial microcompartment shell vertex protein EutN">
    <location>
        <begin position="1"/>
        <end position="95"/>
    </location>
</feature>
<feature type="domain" description="BMV" evidence="3">
    <location>
        <begin position="1"/>
        <end position="83"/>
    </location>
</feature>
<accession>P0AEJ9</accession>
<accession>P77633</accession>
<comment type="function">
    <text evidence="1">Probably forms vertices in the bacterial microcompartment (BMC) dedicated to ethanolamine degradation. It may be involved in transporting positively charged molecules into and out of the BMC.</text>
</comment>
<comment type="pathway">
    <text>Amine and polyamine degradation; ethanolamine degradation.</text>
</comment>
<comment type="subunit">
    <text evidence="2">Homopentamer with a small central pore.</text>
</comment>
<comment type="subcellular location">
    <subcellularLocation>
        <location evidence="1">Bacterial microcompartment</location>
    </subcellularLocation>
</comment>
<comment type="similarity">
    <text evidence="4">Belongs to the CcmL/EutN family.</text>
</comment>
<proteinExistence type="inferred from homology"/>
<sequence length="95" mass="9956">MKLAVVTGQIVCTVRHHGLAHDKLLMVEMIDPQGNPDGQCAVAIDNIGAGTGEWVLLVSGSSARQAHKSETSPVDLCVIGIVDEVVSGGQVIFHK</sequence>
<organism>
    <name type="scientific">Escherichia coli O6:H1 (strain CFT073 / ATCC 700928 / UPEC)</name>
    <dbReference type="NCBI Taxonomy" id="199310"/>
    <lineage>
        <taxon>Bacteria</taxon>
        <taxon>Pseudomonadati</taxon>
        <taxon>Pseudomonadota</taxon>
        <taxon>Gammaproteobacteria</taxon>
        <taxon>Enterobacterales</taxon>
        <taxon>Enterobacteriaceae</taxon>
        <taxon>Escherichia</taxon>
    </lineage>
</organism>
<gene>
    <name type="primary">eutN</name>
    <name type="synonym">cchB</name>
    <name type="ordered locus">c2981</name>
</gene>
<evidence type="ECO:0000250" key="1">
    <source>
        <dbReference type="UniProtKB" id="P0AEJ8"/>
    </source>
</evidence>
<evidence type="ECO:0000250" key="2">
    <source>
        <dbReference type="UniProtKB" id="P0DUM1"/>
    </source>
</evidence>
<evidence type="ECO:0000255" key="3">
    <source>
        <dbReference type="PROSITE-ProRule" id="PRU01280"/>
    </source>
</evidence>
<evidence type="ECO:0000305" key="4"/>
<keyword id="KW-1283">Bacterial microcompartment</keyword>
<keyword id="KW-1185">Reference proteome</keyword>
<name>EUTN_ECOL6</name>
<reference key="1">
    <citation type="journal article" date="2002" name="Proc. Natl. Acad. Sci. U.S.A.">
        <title>Extensive mosaic structure revealed by the complete genome sequence of uropathogenic Escherichia coli.</title>
        <authorList>
            <person name="Welch R.A."/>
            <person name="Burland V."/>
            <person name="Plunkett G. III"/>
            <person name="Redford P."/>
            <person name="Roesch P."/>
            <person name="Rasko D."/>
            <person name="Buckles E.L."/>
            <person name="Liou S.-R."/>
            <person name="Boutin A."/>
            <person name="Hackett J."/>
            <person name="Stroud D."/>
            <person name="Mayhew G.F."/>
            <person name="Rose D.J."/>
            <person name="Zhou S."/>
            <person name="Schwartz D.C."/>
            <person name="Perna N.T."/>
            <person name="Mobley H.L.T."/>
            <person name="Donnenberg M.S."/>
            <person name="Blattner F.R."/>
        </authorList>
    </citation>
    <scope>NUCLEOTIDE SEQUENCE [LARGE SCALE GENOMIC DNA]</scope>
    <source>
        <strain>CFT073 / ATCC 700928 / UPEC</strain>
    </source>
</reference>
<dbReference type="EMBL" id="AE014075">
    <property type="protein sequence ID" value="AAN81431.1"/>
    <property type="molecule type" value="Genomic_DNA"/>
</dbReference>
<dbReference type="RefSeq" id="WP_000762196.1">
    <property type="nucleotide sequence ID" value="NZ_CP051263.1"/>
</dbReference>
<dbReference type="SMR" id="P0AEJ9"/>
<dbReference type="STRING" id="199310.c2981"/>
<dbReference type="GeneID" id="93774684"/>
<dbReference type="KEGG" id="ecc:c2981"/>
<dbReference type="eggNOG" id="COG4576">
    <property type="taxonomic scope" value="Bacteria"/>
</dbReference>
<dbReference type="HOGENOM" id="CLU_148498_0_0_6"/>
<dbReference type="BioCyc" id="ECOL199310:C2981-MONOMER"/>
<dbReference type="UniPathway" id="UPA00560"/>
<dbReference type="EvolutionaryTrace" id="P0AEJ9"/>
<dbReference type="Proteomes" id="UP000001410">
    <property type="component" value="Chromosome"/>
</dbReference>
<dbReference type="GO" id="GO:0031469">
    <property type="term" value="C:bacterial microcompartment"/>
    <property type="evidence" value="ECO:0007669"/>
    <property type="project" value="UniProtKB-SubCell"/>
</dbReference>
<dbReference type="GO" id="GO:0046336">
    <property type="term" value="P:ethanolamine catabolic process"/>
    <property type="evidence" value="ECO:0007669"/>
    <property type="project" value="UniProtKB-UniPathway"/>
</dbReference>
<dbReference type="CDD" id="cd01614">
    <property type="entry name" value="EutN_CcmL"/>
    <property type="match status" value="1"/>
</dbReference>
<dbReference type="FunFam" id="2.40.50.220:FF:000001">
    <property type="entry name" value="Ethanolamine utilization microcompartment protein EutN"/>
    <property type="match status" value="1"/>
</dbReference>
<dbReference type="Gene3D" id="2.40.50.220">
    <property type="entry name" value="EutN/Ccml"/>
    <property type="match status" value="1"/>
</dbReference>
<dbReference type="InterPro" id="IPR004992">
    <property type="entry name" value="EutN_CcmL"/>
</dbReference>
<dbReference type="InterPro" id="IPR036677">
    <property type="entry name" value="EutN_CcmL_sf"/>
</dbReference>
<dbReference type="NCBIfam" id="NF011992">
    <property type="entry name" value="PRK15448.1"/>
    <property type="match status" value="1"/>
</dbReference>
<dbReference type="PANTHER" id="PTHR36539:SF1">
    <property type="entry name" value="BACTERIAL MICROCOMPARTMENT SHELL VERTEX PROTEIN EUTN"/>
    <property type="match status" value="1"/>
</dbReference>
<dbReference type="PANTHER" id="PTHR36539">
    <property type="entry name" value="ETHANOLAMINE UTILIZATION PROTEIN EUTN"/>
    <property type="match status" value="1"/>
</dbReference>
<dbReference type="Pfam" id="PF03319">
    <property type="entry name" value="EutN_CcmL"/>
    <property type="match status" value="1"/>
</dbReference>
<dbReference type="SUPFAM" id="SSF159133">
    <property type="entry name" value="EutN/CcmL-like"/>
    <property type="match status" value="1"/>
</dbReference>
<dbReference type="PROSITE" id="PS51932">
    <property type="entry name" value="BMV"/>
    <property type="match status" value="1"/>
</dbReference>